<keyword id="KW-0010">Activator</keyword>
<keyword id="KW-0067">ATP-binding</keyword>
<keyword id="KW-0238">DNA-binding</keyword>
<keyword id="KW-0347">Helicase</keyword>
<keyword id="KW-0378">Hydrolase</keyword>
<keyword id="KW-0547">Nucleotide-binding</keyword>
<keyword id="KW-0804">Transcription</keyword>
<keyword id="KW-0805">Transcription regulation</keyword>
<feature type="chain" id="PRO_1000188189" description="RNA polymerase-associated protein RapA">
    <location>
        <begin position="1"/>
        <end position="968"/>
    </location>
</feature>
<feature type="domain" description="Helicase ATP-binding" evidence="1">
    <location>
        <begin position="164"/>
        <end position="334"/>
    </location>
</feature>
<feature type="domain" description="Helicase C-terminal" evidence="1">
    <location>
        <begin position="490"/>
        <end position="685"/>
    </location>
</feature>
<feature type="short sequence motif" description="DEAH box">
    <location>
        <begin position="280"/>
        <end position="283"/>
    </location>
</feature>
<feature type="binding site" evidence="1">
    <location>
        <begin position="177"/>
        <end position="184"/>
    </location>
    <ligand>
        <name>ATP</name>
        <dbReference type="ChEBI" id="CHEBI:30616"/>
    </ligand>
</feature>
<dbReference type="EC" id="3.6.4.-" evidence="1"/>
<dbReference type="EMBL" id="CP001127">
    <property type="protein sequence ID" value="ACF92808.1"/>
    <property type="molecule type" value="Genomic_DNA"/>
</dbReference>
<dbReference type="RefSeq" id="WP_001116966.1">
    <property type="nucleotide sequence ID" value="NC_011094.1"/>
</dbReference>
<dbReference type="SMR" id="B4TWU3"/>
<dbReference type="KEGG" id="sew:SeSA_A0108"/>
<dbReference type="HOGENOM" id="CLU_011520_0_0_6"/>
<dbReference type="Proteomes" id="UP000001865">
    <property type="component" value="Chromosome"/>
</dbReference>
<dbReference type="GO" id="GO:0005524">
    <property type="term" value="F:ATP binding"/>
    <property type="evidence" value="ECO:0007669"/>
    <property type="project" value="UniProtKB-UniRule"/>
</dbReference>
<dbReference type="GO" id="GO:0003677">
    <property type="term" value="F:DNA binding"/>
    <property type="evidence" value="ECO:0007669"/>
    <property type="project" value="UniProtKB-KW"/>
</dbReference>
<dbReference type="GO" id="GO:0004386">
    <property type="term" value="F:helicase activity"/>
    <property type="evidence" value="ECO:0007669"/>
    <property type="project" value="UniProtKB-UniRule"/>
</dbReference>
<dbReference type="GO" id="GO:0016817">
    <property type="term" value="F:hydrolase activity, acting on acid anhydrides"/>
    <property type="evidence" value="ECO:0007669"/>
    <property type="project" value="InterPro"/>
</dbReference>
<dbReference type="GO" id="GO:0006355">
    <property type="term" value="P:regulation of DNA-templated transcription"/>
    <property type="evidence" value="ECO:0007669"/>
    <property type="project" value="UniProtKB-UniRule"/>
</dbReference>
<dbReference type="CDD" id="cd18011">
    <property type="entry name" value="DEXDc_RapA"/>
    <property type="match status" value="1"/>
</dbReference>
<dbReference type="CDD" id="cd18793">
    <property type="entry name" value="SF2_C_SNF"/>
    <property type="match status" value="1"/>
</dbReference>
<dbReference type="FunFam" id="2.30.30.140:FF:000020">
    <property type="entry name" value="RNA polymerase-associated protein RapA"/>
    <property type="match status" value="1"/>
</dbReference>
<dbReference type="FunFam" id="3.30.360.80:FF:000001">
    <property type="entry name" value="RNA polymerase-associated protein RapA"/>
    <property type="match status" value="1"/>
</dbReference>
<dbReference type="FunFam" id="3.40.50.10810:FF:000012">
    <property type="entry name" value="RNA polymerase-associated protein RapA"/>
    <property type="match status" value="1"/>
</dbReference>
<dbReference type="FunFam" id="3.40.50.300:FF:000350">
    <property type="entry name" value="RNA polymerase-associated protein RapA"/>
    <property type="match status" value="1"/>
</dbReference>
<dbReference type="Gene3D" id="2.30.30.140">
    <property type="match status" value="1"/>
</dbReference>
<dbReference type="Gene3D" id="2.30.30.930">
    <property type="match status" value="1"/>
</dbReference>
<dbReference type="Gene3D" id="3.30.360.80">
    <property type="match status" value="1"/>
</dbReference>
<dbReference type="Gene3D" id="6.10.140.1500">
    <property type="match status" value="1"/>
</dbReference>
<dbReference type="Gene3D" id="6.10.140.2230">
    <property type="match status" value="1"/>
</dbReference>
<dbReference type="Gene3D" id="3.40.50.300">
    <property type="entry name" value="P-loop containing nucleotide triphosphate hydrolases"/>
    <property type="match status" value="1"/>
</dbReference>
<dbReference type="Gene3D" id="3.40.50.10810">
    <property type="entry name" value="Tandem AAA-ATPase domain"/>
    <property type="match status" value="1"/>
</dbReference>
<dbReference type="HAMAP" id="MF_01821">
    <property type="entry name" value="Helicase_RapA"/>
    <property type="match status" value="1"/>
</dbReference>
<dbReference type="InterPro" id="IPR014001">
    <property type="entry name" value="Helicase_ATP-bd"/>
</dbReference>
<dbReference type="InterPro" id="IPR001650">
    <property type="entry name" value="Helicase_C-like"/>
</dbReference>
<dbReference type="InterPro" id="IPR023949">
    <property type="entry name" value="Helicase_RapA"/>
</dbReference>
<dbReference type="InterPro" id="IPR027417">
    <property type="entry name" value="P-loop_NTPase"/>
</dbReference>
<dbReference type="InterPro" id="IPR022737">
    <property type="entry name" value="RapA_C"/>
</dbReference>
<dbReference type="InterPro" id="IPR038718">
    <property type="entry name" value="SNF2-like_sf"/>
</dbReference>
<dbReference type="InterPro" id="IPR049730">
    <property type="entry name" value="SNF2/RAD54-like_C"/>
</dbReference>
<dbReference type="InterPro" id="IPR000330">
    <property type="entry name" value="SNF2_N"/>
</dbReference>
<dbReference type="InterPro" id="IPR040765">
    <property type="entry name" value="Tudor_1_RapA"/>
</dbReference>
<dbReference type="InterPro" id="IPR040766">
    <property type="entry name" value="Tudor_2_RapA"/>
</dbReference>
<dbReference type="NCBIfam" id="NF003426">
    <property type="entry name" value="PRK04914.1"/>
    <property type="match status" value="1"/>
</dbReference>
<dbReference type="PANTHER" id="PTHR45766">
    <property type="entry name" value="DNA ANNEALING HELICASE AND ENDONUCLEASE ZRANB3 FAMILY MEMBER"/>
    <property type="match status" value="1"/>
</dbReference>
<dbReference type="PANTHER" id="PTHR45766:SF6">
    <property type="entry name" value="SWI_SNF-RELATED MATRIX-ASSOCIATED ACTIN-DEPENDENT REGULATOR OF CHROMATIN SUBFAMILY A-LIKE PROTEIN 1"/>
    <property type="match status" value="1"/>
</dbReference>
<dbReference type="Pfam" id="PF00271">
    <property type="entry name" value="Helicase_C"/>
    <property type="match status" value="1"/>
</dbReference>
<dbReference type="Pfam" id="PF12137">
    <property type="entry name" value="RapA_C"/>
    <property type="match status" value="1"/>
</dbReference>
<dbReference type="Pfam" id="PF00176">
    <property type="entry name" value="SNF2-rel_dom"/>
    <property type="match status" value="1"/>
</dbReference>
<dbReference type="Pfam" id="PF18339">
    <property type="entry name" value="Tudor_1_RapA"/>
    <property type="match status" value="1"/>
</dbReference>
<dbReference type="Pfam" id="PF18337">
    <property type="entry name" value="Tudor_RapA"/>
    <property type="match status" value="1"/>
</dbReference>
<dbReference type="SMART" id="SM00487">
    <property type="entry name" value="DEXDc"/>
    <property type="match status" value="1"/>
</dbReference>
<dbReference type="SMART" id="SM00490">
    <property type="entry name" value="HELICc"/>
    <property type="match status" value="1"/>
</dbReference>
<dbReference type="SUPFAM" id="SSF52540">
    <property type="entry name" value="P-loop containing nucleoside triphosphate hydrolases"/>
    <property type="match status" value="2"/>
</dbReference>
<dbReference type="PROSITE" id="PS51192">
    <property type="entry name" value="HELICASE_ATP_BIND_1"/>
    <property type="match status" value="1"/>
</dbReference>
<dbReference type="PROSITE" id="PS51194">
    <property type="entry name" value="HELICASE_CTER"/>
    <property type="match status" value="1"/>
</dbReference>
<sequence>MPFTLGQRWISDTESELGLGTVVAMDARTVTLLFPSTGENRLYARSDSPVTRVMFNPGDTITSHEGWQLHIDEVKEENGLLVYVGTRLDTEETNVTLREVLLDSKLVFSKPQDRLFAGQIDRMDRFALRYRARKFQSEQYRMPYSGLRGQRTNLIPHQLNIAHDVGRRHAPRVLLADEVGLGKTIEAGMILHQQLLSGAAERVLIIVPETLQHQWLVEMLRRFNLRFALFDDERYTEAQHDAYNPFETEQLVICSLDFARRNKQRLEHLCDAEWDLLVVDEAHHLVWSTDAPSREYMAIEQLAERVPGVLLLTATPEQLGMESHFARLRLLDPNRFHDFEQFVEEQKNYRPVADAVAMLLAGNKLSNDELNRLGDLIGEQDIEPLLQAANSDRDDAQAARDELVSMLMDRHGTSRVLFRNTRNGVKGFPKRELHTVKLPLPTQYQTAIKVSGIMGARKSAEDRARDMLYPEQIYQEFEGDTGTWWNFDPRVEWLMGYLTSHRSQKVLVICAKATTALQLEQVLREREGIRAAVFHEGMSIIERDRAAAWFAEEDTGAQVLLCSEIGSEGRNFQFASNLVMFDLPFNPDLLEQRIGRLDRIGQAHDIQIHVPYLEKTAQSVLVRWYHEGLDAFEHTCPTGRAIYDSAYASLINYLAAPEETDGFDDLIKSCREQHEALKAQLEQGRDRLLEIHSNGGEKAQQLAQSIEEQDDDTNLIAFAMNLFDIVGINQDDRGDNLIVLTPSDHMLVPDFPGLPEDGCTITFERDVALSREDAQFITWEHPLIRNGLDLILSGDTGSSTISLLKNKALPVGTLLVELVYVVEAQAPKQLQLNRFLPPTPVRMLLDKNGNNLAAQVEFETFNRQLSAVNRHTGSKLVNAVQQDVHAILQLGETQIEKSARALIDNARREADEKLSGELSRLEALRAVNPNIRDDELAAIDSNRQQVLESLNQAGWRLDALRLIVVTHQ</sequence>
<organism>
    <name type="scientific">Salmonella schwarzengrund (strain CVM19633)</name>
    <dbReference type="NCBI Taxonomy" id="439843"/>
    <lineage>
        <taxon>Bacteria</taxon>
        <taxon>Pseudomonadati</taxon>
        <taxon>Pseudomonadota</taxon>
        <taxon>Gammaproteobacteria</taxon>
        <taxon>Enterobacterales</taxon>
        <taxon>Enterobacteriaceae</taxon>
        <taxon>Salmonella</taxon>
    </lineage>
</organism>
<evidence type="ECO:0000255" key="1">
    <source>
        <dbReference type="HAMAP-Rule" id="MF_01821"/>
    </source>
</evidence>
<comment type="function">
    <text evidence="1">Transcription regulator that activates transcription by stimulating RNA polymerase (RNAP) recycling in case of stress conditions such as supercoiled DNA or high salt concentrations. Probably acts by releasing the RNAP, when it is trapped or immobilized on tightly supercoiled DNA. Does not activate transcription on linear DNA. Probably not involved in DNA repair.</text>
</comment>
<comment type="subunit">
    <text evidence="1">Interacts with the RNAP. Has a higher affinity for the core RNAP than for the holoenzyme. Its ATPase activity is stimulated by binding to RNAP.</text>
</comment>
<comment type="similarity">
    <text evidence="1">Belongs to the SNF2/RAD54 helicase family. RapA subfamily.</text>
</comment>
<gene>
    <name evidence="1" type="primary">rapA</name>
    <name type="ordered locus">SeSA_A0108</name>
</gene>
<accession>B4TWU3</accession>
<name>RAPA_SALSV</name>
<proteinExistence type="inferred from homology"/>
<reference key="1">
    <citation type="journal article" date="2011" name="J. Bacteriol.">
        <title>Comparative genomics of 28 Salmonella enterica isolates: evidence for CRISPR-mediated adaptive sublineage evolution.</title>
        <authorList>
            <person name="Fricke W.F."/>
            <person name="Mammel M.K."/>
            <person name="McDermott P.F."/>
            <person name="Tartera C."/>
            <person name="White D.G."/>
            <person name="Leclerc J.E."/>
            <person name="Ravel J."/>
            <person name="Cebula T.A."/>
        </authorList>
    </citation>
    <scope>NUCLEOTIDE SEQUENCE [LARGE SCALE GENOMIC DNA]</scope>
    <source>
        <strain>CVM19633</strain>
    </source>
</reference>
<protein>
    <recommendedName>
        <fullName evidence="1">RNA polymerase-associated protein RapA</fullName>
        <ecNumber evidence="1">3.6.4.-</ecNumber>
    </recommendedName>
    <alternativeName>
        <fullName evidence="1">ATP-dependent helicase HepA</fullName>
    </alternativeName>
</protein>